<reference key="1">
    <citation type="journal article" date="2006" name="Appl. Environ. Microbiol.">
        <title>Genome sequence of the chemolithoautotrophic nitrite-oxidizing bacterium Nitrobacter winogradskyi Nb-255.</title>
        <authorList>
            <person name="Starkenburg S.R."/>
            <person name="Chain P.S.G."/>
            <person name="Sayavedra-Soto L.A."/>
            <person name="Hauser L."/>
            <person name="Land M.L."/>
            <person name="Larimer F.W."/>
            <person name="Malfatti S.A."/>
            <person name="Klotz M.G."/>
            <person name="Bottomley P.J."/>
            <person name="Arp D.J."/>
            <person name="Hickey W.J."/>
        </authorList>
    </citation>
    <scope>NUCLEOTIDE SEQUENCE [LARGE SCALE GENOMIC DNA]</scope>
    <source>
        <strain>ATCC 25391 / DSM 10237 / CIP 104748 / NCIMB 11846 / Nb-255</strain>
    </source>
</reference>
<gene>
    <name evidence="1" type="primary">rbfA</name>
    <name type="ordered locus">Nwi_0025</name>
</gene>
<name>RBFA_NITWN</name>
<comment type="function">
    <text evidence="1">One of several proteins that assist in the late maturation steps of the functional core of the 30S ribosomal subunit. Associates with free 30S ribosomal subunits (but not with 30S subunits that are part of 70S ribosomes or polysomes). Required for efficient processing of 16S rRNA. May interact with the 5'-terminal helix region of 16S rRNA.</text>
</comment>
<comment type="subunit">
    <text evidence="1">Monomer. Binds 30S ribosomal subunits, but not 50S ribosomal subunits or 70S ribosomes.</text>
</comment>
<comment type="subcellular location">
    <subcellularLocation>
        <location evidence="1">Cytoplasm</location>
    </subcellularLocation>
</comment>
<comment type="similarity">
    <text evidence="1">Belongs to the RbfA family.</text>
</comment>
<comment type="sequence caution" evidence="2">
    <conflict type="erroneous initiation">
        <sequence resource="EMBL-CDS" id="ABA03293"/>
    </conflict>
    <text>Extended N-terminus.</text>
</comment>
<dbReference type="EMBL" id="CP000115">
    <property type="protein sequence ID" value="ABA03293.1"/>
    <property type="status" value="ALT_INIT"/>
    <property type="molecule type" value="Genomic_DNA"/>
</dbReference>
<dbReference type="RefSeq" id="WP_041344619.1">
    <property type="nucleotide sequence ID" value="NC_007406.1"/>
</dbReference>
<dbReference type="SMR" id="Q3SWP8"/>
<dbReference type="STRING" id="323098.Nwi_0025"/>
<dbReference type="KEGG" id="nwi:Nwi_0025"/>
<dbReference type="eggNOG" id="COG0858">
    <property type="taxonomic scope" value="Bacteria"/>
</dbReference>
<dbReference type="HOGENOM" id="CLU_089475_1_0_5"/>
<dbReference type="OrthoDB" id="9805051at2"/>
<dbReference type="Proteomes" id="UP000002531">
    <property type="component" value="Chromosome"/>
</dbReference>
<dbReference type="GO" id="GO:0005829">
    <property type="term" value="C:cytosol"/>
    <property type="evidence" value="ECO:0007669"/>
    <property type="project" value="TreeGrafter"/>
</dbReference>
<dbReference type="GO" id="GO:0043024">
    <property type="term" value="F:ribosomal small subunit binding"/>
    <property type="evidence" value="ECO:0007669"/>
    <property type="project" value="TreeGrafter"/>
</dbReference>
<dbReference type="GO" id="GO:0030490">
    <property type="term" value="P:maturation of SSU-rRNA"/>
    <property type="evidence" value="ECO:0007669"/>
    <property type="project" value="UniProtKB-UniRule"/>
</dbReference>
<dbReference type="Gene3D" id="3.30.300.20">
    <property type="match status" value="1"/>
</dbReference>
<dbReference type="HAMAP" id="MF_00003">
    <property type="entry name" value="RbfA"/>
    <property type="match status" value="1"/>
</dbReference>
<dbReference type="InterPro" id="IPR015946">
    <property type="entry name" value="KH_dom-like_a/b"/>
</dbReference>
<dbReference type="InterPro" id="IPR000238">
    <property type="entry name" value="RbfA"/>
</dbReference>
<dbReference type="InterPro" id="IPR023799">
    <property type="entry name" value="RbfA_dom_sf"/>
</dbReference>
<dbReference type="InterPro" id="IPR020053">
    <property type="entry name" value="Ribosome-bd_factorA_CS"/>
</dbReference>
<dbReference type="NCBIfam" id="NF001802">
    <property type="entry name" value="PRK00521.2-5"/>
    <property type="match status" value="1"/>
</dbReference>
<dbReference type="NCBIfam" id="TIGR00082">
    <property type="entry name" value="rbfA"/>
    <property type="match status" value="1"/>
</dbReference>
<dbReference type="PANTHER" id="PTHR33515">
    <property type="entry name" value="RIBOSOME-BINDING FACTOR A, CHLOROPLASTIC-RELATED"/>
    <property type="match status" value="1"/>
</dbReference>
<dbReference type="PANTHER" id="PTHR33515:SF1">
    <property type="entry name" value="RIBOSOME-BINDING FACTOR A, CHLOROPLASTIC-RELATED"/>
    <property type="match status" value="1"/>
</dbReference>
<dbReference type="Pfam" id="PF02033">
    <property type="entry name" value="RBFA"/>
    <property type="match status" value="1"/>
</dbReference>
<dbReference type="SUPFAM" id="SSF89919">
    <property type="entry name" value="Ribosome-binding factor A, RbfA"/>
    <property type="match status" value="1"/>
</dbReference>
<dbReference type="PROSITE" id="PS01319">
    <property type="entry name" value="RBFA"/>
    <property type="match status" value="1"/>
</dbReference>
<proteinExistence type="inferred from homology"/>
<accession>Q3SWP8</accession>
<feature type="chain" id="PRO_0000321232" description="Ribosome-binding factor A">
    <location>
        <begin position="1"/>
        <end position="137"/>
    </location>
</feature>
<organism>
    <name type="scientific">Nitrobacter winogradskyi (strain ATCC 25391 / DSM 10237 / CIP 104748 / NCIMB 11846 / Nb-255)</name>
    <dbReference type="NCBI Taxonomy" id="323098"/>
    <lineage>
        <taxon>Bacteria</taxon>
        <taxon>Pseudomonadati</taxon>
        <taxon>Pseudomonadota</taxon>
        <taxon>Alphaproteobacteria</taxon>
        <taxon>Hyphomicrobiales</taxon>
        <taxon>Nitrobacteraceae</taxon>
        <taxon>Nitrobacter</taxon>
    </lineage>
</organism>
<keyword id="KW-0963">Cytoplasm</keyword>
<keyword id="KW-1185">Reference proteome</keyword>
<keyword id="KW-0690">Ribosome biogenesis</keyword>
<protein>
    <recommendedName>
        <fullName evidence="1">Ribosome-binding factor A</fullName>
    </recommendedName>
</protein>
<evidence type="ECO:0000255" key="1">
    <source>
        <dbReference type="HAMAP-Rule" id="MF_00003"/>
    </source>
</evidence>
<evidence type="ECO:0000305" key="2"/>
<sequence>MPRRHQPEKHPGGSHRQLRVAETVRHAIADILAQGQVHDPVLEGHLVTVPEVRMSADLKLATIYVMPLGGRDTADVIDALDRNRKFLRGEIARRVNLKFAPDIRFRVDERFDEAERIEKLLRTPAVQRDLAPDTDES</sequence>